<keyword id="KW-1185">Reference proteome</keyword>
<comment type="subcellular location">
    <subcellularLocation>
        <location evidence="1">Bud neck</location>
    </subcellularLocation>
</comment>
<comment type="similarity">
    <text evidence="3">Belongs to the AIM44 family.</text>
</comment>
<sequence length="678" mass="75302">MSGMIIRTPTRTKTKSFNGKQMDFTFPSPVRGSVDEHSLDNHRIVNETLSLKPQEDIEVSSQMLSDYTSSASNANTYSGNSSNGYYSFANISDNTTASPKLHNHNNMVSPILENTESSFQLQTVESLDPQRQRIRSTYEYGHMGSNQNLRQTREKSKTAESISTTIAQQTIPTADNISFDFSDISGYEDAVSNKSENKNHKPQNSVVKNQLRATSRAAISTNDSPSLSNVYMSSLINSSLESTRKTSTASSSVRSSRSSLKRSNAVRCKGGLLQYFTKLGIKIRKNCNKLRLVMRRKLFRFKKNSKSFSRSNSIRSGLEISKLPKVRHEKKLRQESSSIAPHTLHQKRTHGFNNKLHKSMSLKSLQPALVSETVPEINNNLHDILESKEKTADVPAATKTMKTTPSLRRTPSSIRRAASILTSNVATPKASANNRNSMIEYDTVENSRISSRNSSIKSKGRLVRSSGSVGLSSIARQPSIVVKNKVIPLSMSRFSIKEEIKEEEEESEESTSDYYVETEPVEAAPRTLAGPKSYAPENFRYGANVDDIKTLYKHYLSTVISRRIKMRLEMAQGEHSATNEPALTHQSTASLKDPIASVLTEYDSEGSEGTNLFDDEDDSSASEEDDEVVLPPLKGHNSTMSFVVQSPFTRQNSMASSSALLYLPVKRSLTLPIGMKIT</sequence>
<proteinExistence type="inferred from homology"/>
<name>AIM44_CANGA</name>
<gene>
    <name type="primary">AIM44</name>
    <name type="ordered locus">CAGL0M02123g</name>
</gene>
<dbReference type="EMBL" id="CR380959">
    <property type="protein sequence ID" value="CAG62414.1"/>
    <property type="molecule type" value="Genomic_DNA"/>
</dbReference>
<dbReference type="RefSeq" id="XP_449438.1">
    <property type="nucleotide sequence ID" value="XM_449438.1"/>
</dbReference>
<dbReference type="FunCoup" id="Q6FK06">
    <property type="interactions" value="46"/>
</dbReference>
<dbReference type="STRING" id="284593.Q6FK06"/>
<dbReference type="EnsemblFungi" id="CAGL0M02123g-T">
    <property type="protein sequence ID" value="CAGL0M02123g-T-p1"/>
    <property type="gene ID" value="CAGL0M02123g"/>
</dbReference>
<dbReference type="KEGG" id="cgr:2891764"/>
<dbReference type="CGD" id="CAL0136827">
    <property type="gene designation" value="CAGL0M02123g"/>
</dbReference>
<dbReference type="VEuPathDB" id="FungiDB:B1J91_M02123g"/>
<dbReference type="VEuPathDB" id="FungiDB:CAGL0M02123g"/>
<dbReference type="eggNOG" id="ENOG502R02U">
    <property type="taxonomic scope" value="Eukaryota"/>
</dbReference>
<dbReference type="HOGENOM" id="CLU_385965_0_0_1"/>
<dbReference type="InParanoid" id="Q6FK06"/>
<dbReference type="OMA" id="MDFKFPS"/>
<dbReference type="Proteomes" id="UP000002428">
    <property type="component" value="Chromosome M"/>
</dbReference>
<dbReference type="GO" id="GO:0032174">
    <property type="term" value="C:cellular bud neck septin collar"/>
    <property type="evidence" value="ECO:0007669"/>
    <property type="project" value="EnsemblFungi"/>
</dbReference>
<dbReference type="GO" id="GO:0032177">
    <property type="term" value="C:cellular bud neck split septin rings"/>
    <property type="evidence" value="ECO:0007669"/>
    <property type="project" value="EnsemblFungi"/>
</dbReference>
<dbReference type="GO" id="GO:0005637">
    <property type="term" value="C:nuclear inner membrane"/>
    <property type="evidence" value="ECO:0007669"/>
    <property type="project" value="EnsemblFungi"/>
</dbReference>
<dbReference type="GO" id="GO:0005886">
    <property type="term" value="C:plasma membrane"/>
    <property type="evidence" value="ECO:0007669"/>
    <property type="project" value="EnsemblFungi"/>
</dbReference>
<dbReference type="GO" id="GO:0045185">
    <property type="term" value="P:maintenance of protein location"/>
    <property type="evidence" value="ECO:0007669"/>
    <property type="project" value="EnsemblFungi"/>
</dbReference>
<dbReference type="GO" id="GO:1903473">
    <property type="term" value="P:positive regulation of mitotic actomyosin contractile ring contraction"/>
    <property type="evidence" value="ECO:0007669"/>
    <property type="project" value="EnsemblFungi"/>
</dbReference>
<dbReference type="GO" id="GO:0098841">
    <property type="term" value="P:protein localization to cell division site after cytokinesis"/>
    <property type="evidence" value="ECO:0007669"/>
    <property type="project" value="EnsemblFungi"/>
</dbReference>
<dbReference type="GO" id="GO:1901900">
    <property type="term" value="P:regulation of protein localization to cell division site"/>
    <property type="evidence" value="ECO:0007669"/>
    <property type="project" value="EnsemblFungi"/>
</dbReference>
<dbReference type="GO" id="GO:1990344">
    <property type="term" value="P:secondary cell septum biogenesis"/>
    <property type="evidence" value="ECO:0007669"/>
    <property type="project" value="EnsemblFungi"/>
</dbReference>
<evidence type="ECO:0000250" key="1"/>
<evidence type="ECO:0000256" key="2">
    <source>
        <dbReference type="SAM" id="MobiDB-lite"/>
    </source>
</evidence>
<evidence type="ECO:0000305" key="3"/>
<protein>
    <recommendedName>
        <fullName>Altered inheritance of mitochondria protein 44</fullName>
    </recommendedName>
</protein>
<organism>
    <name type="scientific">Candida glabrata (strain ATCC 2001 / BCRC 20586 / JCM 3761 / NBRC 0622 / NRRL Y-65 / CBS 138)</name>
    <name type="common">Yeast</name>
    <name type="synonym">Nakaseomyces glabratus</name>
    <dbReference type="NCBI Taxonomy" id="284593"/>
    <lineage>
        <taxon>Eukaryota</taxon>
        <taxon>Fungi</taxon>
        <taxon>Dikarya</taxon>
        <taxon>Ascomycota</taxon>
        <taxon>Saccharomycotina</taxon>
        <taxon>Saccharomycetes</taxon>
        <taxon>Saccharomycetales</taxon>
        <taxon>Saccharomycetaceae</taxon>
        <taxon>Nakaseomyces</taxon>
    </lineage>
</organism>
<reference key="1">
    <citation type="journal article" date="2004" name="Nature">
        <title>Genome evolution in yeasts.</title>
        <authorList>
            <person name="Dujon B."/>
            <person name="Sherman D."/>
            <person name="Fischer G."/>
            <person name="Durrens P."/>
            <person name="Casaregola S."/>
            <person name="Lafontaine I."/>
            <person name="de Montigny J."/>
            <person name="Marck C."/>
            <person name="Neuveglise C."/>
            <person name="Talla E."/>
            <person name="Goffard N."/>
            <person name="Frangeul L."/>
            <person name="Aigle M."/>
            <person name="Anthouard V."/>
            <person name="Babour A."/>
            <person name="Barbe V."/>
            <person name="Barnay S."/>
            <person name="Blanchin S."/>
            <person name="Beckerich J.-M."/>
            <person name="Beyne E."/>
            <person name="Bleykasten C."/>
            <person name="Boisrame A."/>
            <person name="Boyer J."/>
            <person name="Cattolico L."/>
            <person name="Confanioleri F."/>
            <person name="de Daruvar A."/>
            <person name="Despons L."/>
            <person name="Fabre E."/>
            <person name="Fairhead C."/>
            <person name="Ferry-Dumazet H."/>
            <person name="Groppi A."/>
            <person name="Hantraye F."/>
            <person name="Hennequin C."/>
            <person name="Jauniaux N."/>
            <person name="Joyet P."/>
            <person name="Kachouri R."/>
            <person name="Kerrest A."/>
            <person name="Koszul R."/>
            <person name="Lemaire M."/>
            <person name="Lesur I."/>
            <person name="Ma L."/>
            <person name="Muller H."/>
            <person name="Nicaud J.-M."/>
            <person name="Nikolski M."/>
            <person name="Oztas S."/>
            <person name="Ozier-Kalogeropoulos O."/>
            <person name="Pellenz S."/>
            <person name="Potier S."/>
            <person name="Richard G.-F."/>
            <person name="Straub M.-L."/>
            <person name="Suleau A."/>
            <person name="Swennen D."/>
            <person name="Tekaia F."/>
            <person name="Wesolowski-Louvel M."/>
            <person name="Westhof E."/>
            <person name="Wirth B."/>
            <person name="Zeniou-Meyer M."/>
            <person name="Zivanovic Y."/>
            <person name="Bolotin-Fukuhara M."/>
            <person name="Thierry A."/>
            <person name="Bouchier C."/>
            <person name="Caudron B."/>
            <person name="Scarpelli C."/>
            <person name="Gaillardin C."/>
            <person name="Weissenbach J."/>
            <person name="Wincker P."/>
            <person name="Souciet J.-L."/>
        </authorList>
    </citation>
    <scope>NUCLEOTIDE SEQUENCE [LARGE SCALE GENOMIC DNA]</scope>
    <source>
        <strain>ATCC 2001 / BCRC 20586 / JCM 3761 / NBRC 0622 / NRRL Y-65 / CBS 138</strain>
    </source>
</reference>
<feature type="chain" id="PRO_0000408695" description="Altered inheritance of mitochondria protein 44">
    <location>
        <begin position="1"/>
        <end position="678"/>
    </location>
</feature>
<feature type="region of interest" description="Disordered" evidence="2">
    <location>
        <begin position="1"/>
        <end position="35"/>
    </location>
</feature>
<feature type="region of interest" description="Disordered" evidence="2">
    <location>
        <begin position="138"/>
        <end position="167"/>
    </location>
</feature>
<feature type="region of interest" description="Disordered" evidence="2">
    <location>
        <begin position="190"/>
        <end position="210"/>
    </location>
</feature>
<feature type="region of interest" description="Disordered" evidence="2">
    <location>
        <begin position="242"/>
        <end position="261"/>
    </location>
</feature>
<feature type="region of interest" description="Disordered" evidence="2">
    <location>
        <begin position="602"/>
        <end position="632"/>
    </location>
</feature>
<feature type="compositionally biased region" description="Polar residues" evidence="2">
    <location>
        <begin position="9"/>
        <end position="19"/>
    </location>
</feature>
<feature type="compositionally biased region" description="Low complexity" evidence="2">
    <location>
        <begin position="245"/>
        <end position="261"/>
    </location>
</feature>
<feature type="compositionally biased region" description="Acidic residues" evidence="2">
    <location>
        <begin position="613"/>
        <end position="628"/>
    </location>
</feature>
<accession>Q6FK06</accession>